<dbReference type="EMBL" id="M29691">
    <property type="protein sequence ID" value="AAA83373.1"/>
    <property type="molecule type" value="Genomic_DNA"/>
</dbReference>
<dbReference type="EMBL" id="D84432">
    <property type="protein sequence ID" value="BAA12538.1"/>
    <property type="molecule type" value="Genomic_DNA"/>
</dbReference>
<dbReference type="EMBL" id="AL009126">
    <property type="protein sequence ID" value="CAB14398.1"/>
    <property type="molecule type" value="Genomic_DNA"/>
</dbReference>
<dbReference type="PIR" id="H30338">
    <property type="entry name" value="H30338"/>
</dbReference>
<dbReference type="RefSeq" id="NP_390347.1">
    <property type="nucleotide sequence ID" value="NC_000964.3"/>
</dbReference>
<dbReference type="RefSeq" id="WP_003230170.1">
    <property type="nucleotide sequence ID" value="NZ_OZ025638.1"/>
</dbReference>
<dbReference type="FunCoup" id="P25959">
    <property type="interactions" value="29"/>
</dbReference>
<dbReference type="STRING" id="224308.BSU24670"/>
<dbReference type="PaxDb" id="224308-BSU24670"/>
<dbReference type="DNASU" id="938538"/>
<dbReference type="EnsemblBacteria" id="CAB14398">
    <property type="protein sequence ID" value="CAB14398"/>
    <property type="gene ID" value="BSU_24670"/>
</dbReference>
<dbReference type="GeneID" id="938538"/>
<dbReference type="KEGG" id="bsu:BSU24670"/>
<dbReference type="PATRIC" id="fig|224308.179.peg.2685"/>
<dbReference type="InParanoid" id="P25959"/>
<dbReference type="OrthoDB" id="2969153at2"/>
<dbReference type="BioCyc" id="BSUB:BSU24670-MONOMER"/>
<dbReference type="Proteomes" id="UP000001570">
    <property type="component" value="Chromosome"/>
</dbReference>
<dbReference type="GO" id="GO:0005576">
    <property type="term" value="C:extracellular region"/>
    <property type="evidence" value="ECO:0007669"/>
    <property type="project" value="UniProtKB-SubCell"/>
</dbReference>
<dbReference type="GO" id="GO:0005886">
    <property type="term" value="C:plasma membrane"/>
    <property type="evidence" value="ECO:0007669"/>
    <property type="project" value="UniProtKB-SubCell"/>
</dbReference>
<dbReference type="GO" id="GO:0030420">
    <property type="term" value="P:establishment of competence for transformation"/>
    <property type="evidence" value="ECO:0007669"/>
    <property type="project" value="UniProtKB-KW"/>
</dbReference>
<dbReference type="InterPro" id="IPR020372">
    <property type="entry name" value="Competence_ComGG"/>
</dbReference>
<dbReference type="Pfam" id="PF14173">
    <property type="entry name" value="ComGG"/>
    <property type="match status" value="1"/>
</dbReference>
<sequence length="124" mass="14540">MYRTRGFIYPAVLFVSALVLLIVNFVAAQYISRCMFEKETKELYIGENLLQNGVLLSIRHVLEERKGQEGTQQFLYGRVSYYIHDTSIKEQKEINLRVSTDSGTERTAQIVFDQKQKKLLRWTE</sequence>
<comment type="function">
    <text evidence="1 4">Required for formation of the type IV-like pilus (T4P) that plays a role in transformation (By similarity). Transformation pili are dynamically extended and retracted, perhaps thereby promoting DNA uptake and transformation (Probable). Required for transformation and DNA binding.</text>
</comment>
<comment type="subunit">
    <text evidence="1">The transformation pili are flexible filaments, consisting mainly of the major pilin ComGC and smaller amounts of the minor pilins, including at least ComGD, ComGF and ComGG. Interacts with ComGC; the interaction is probably direct. Interacts with ComGD. Interacts with ComGF. May act as a link between ComGC, ComGD and ComGF (By similarity). Homodimer; disulfide-linked. A minor fraction of ComGG is found as a disulfide-bonded homodimer.</text>
</comment>
<comment type="subcellular location">
    <subcellularLocation>
        <location evidence="3">Cell membrane</location>
        <topology evidence="3">Peripheral membrane protein</topology>
    </subcellularLocation>
    <subcellularLocation>
        <location evidence="3">Cell membrane</location>
        <topology evidence="3">Peptidoglycan-anchor</topology>
    </subcellularLocation>
    <subcellularLocation>
        <location evidence="3">Secreted</location>
    </subcellularLocation>
    <text>About half of pre-ComGG is present as a peripheral membrane protein and the other half as an integral protein. Upon (partial) processing ComGG is translocated to a position outside the membrane.</text>
</comment>
<comment type="PTM">
    <text>Partial processing of ComGG in competent cells requires ComC.</text>
</comment>
<proteinExistence type="evidence at protein level"/>
<evidence type="ECO:0000250" key="1">
    <source>
        <dbReference type="UniProtKB" id="Q8CY84"/>
    </source>
</evidence>
<evidence type="ECO:0000255" key="2"/>
<evidence type="ECO:0000269" key="3">
    <source>
    </source>
</evidence>
<evidence type="ECO:0000305" key="4"/>
<feature type="signal peptide" evidence="2">
    <location>
        <begin position="1"/>
        <end position="28"/>
    </location>
</feature>
<feature type="chain" id="PRO_0000020970" description="Competence protein ComGG">
    <location>
        <begin position="29"/>
        <end position="124"/>
    </location>
</feature>
<feature type="disulfide bond" description="Interchain" evidence="4">
    <location>
        <position position="34"/>
    </location>
</feature>
<reference key="1">
    <citation type="journal article" date="1989" name="J. Bacteriol.">
        <title>Nucleotide sequence and genetic organization of the Bacillus subtilis comG operon.</title>
        <authorList>
            <person name="Albano M."/>
            <person name="Breitling R."/>
            <person name="Dubnau D.A."/>
        </authorList>
    </citation>
    <scope>NUCLEOTIDE SEQUENCE [GENOMIC DNA]</scope>
</reference>
<reference key="2">
    <citation type="journal article" date="1996" name="Microbiology">
        <title>Systematic sequencing of the 283 kb 210 degrees-232 degrees region of the Bacillus subtilis genome containing the skin element and many sporulation genes.</title>
        <authorList>
            <person name="Mizuno M."/>
            <person name="Masuda S."/>
            <person name="Takemaru K."/>
            <person name="Hosono S."/>
            <person name="Sato T."/>
            <person name="Takeuchi M."/>
            <person name="Kobayashi Y."/>
        </authorList>
    </citation>
    <scope>NUCLEOTIDE SEQUENCE [GENOMIC DNA]</scope>
    <source>
        <strain>168 / JH642</strain>
    </source>
</reference>
<reference key="3">
    <citation type="journal article" date="1997" name="Nature">
        <title>The complete genome sequence of the Gram-positive bacterium Bacillus subtilis.</title>
        <authorList>
            <person name="Kunst F."/>
            <person name="Ogasawara N."/>
            <person name="Moszer I."/>
            <person name="Albertini A.M."/>
            <person name="Alloni G."/>
            <person name="Azevedo V."/>
            <person name="Bertero M.G."/>
            <person name="Bessieres P."/>
            <person name="Bolotin A."/>
            <person name="Borchert S."/>
            <person name="Borriss R."/>
            <person name="Boursier L."/>
            <person name="Brans A."/>
            <person name="Braun M."/>
            <person name="Brignell S.C."/>
            <person name="Bron S."/>
            <person name="Brouillet S."/>
            <person name="Bruschi C.V."/>
            <person name="Caldwell B."/>
            <person name="Capuano V."/>
            <person name="Carter N.M."/>
            <person name="Choi S.-K."/>
            <person name="Codani J.-J."/>
            <person name="Connerton I.F."/>
            <person name="Cummings N.J."/>
            <person name="Daniel R.A."/>
            <person name="Denizot F."/>
            <person name="Devine K.M."/>
            <person name="Duesterhoeft A."/>
            <person name="Ehrlich S.D."/>
            <person name="Emmerson P.T."/>
            <person name="Entian K.-D."/>
            <person name="Errington J."/>
            <person name="Fabret C."/>
            <person name="Ferrari E."/>
            <person name="Foulger D."/>
            <person name="Fritz C."/>
            <person name="Fujita M."/>
            <person name="Fujita Y."/>
            <person name="Fuma S."/>
            <person name="Galizzi A."/>
            <person name="Galleron N."/>
            <person name="Ghim S.-Y."/>
            <person name="Glaser P."/>
            <person name="Goffeau A."/>
            <person name="Golightly E.J."/>
            <person name="Grandi G."/>
            <person name="Guiseppi G."/>
            <person name="Guy B.J."/>
            <person name="Haga K."/>
            <person name="Haiech J."/>
            <person name="Harwood C.R."/>
            <person name="Henaut A."/>
            <person name="Hilbert H."/>
            <person name="Holsappel S."/>
            <person name="Hosono S."/>
            <person name="Hullo M.-F."/>
            <person name="Itaya M."/>
            <person name="Jones L.-M."/>
            <person name="Joris B."/>
            <person name="Karamata D."/>
            <person name="Kasahara Y."/>
            <person name="Klaerr-Blanchard M."/>
            <person name="Klein C."/>
            <person name="Kobayashi Y."/>
            <person name="Koetter P."/>
            <person name="Koningstein G."/>
            <person name="Krogh S."/>
            <person name="Kumano M."/>
            <person name="Kurita K."/>
            <person name="Lapidus A."/>
            <person name="Lardinois S."/>
            <person name="Lauber J."/>
            <person name="Lazarevic V."/>
            <person name="Lee S.-M."/>
            <person name="Levine A."/>
            <person name="Liu H."/>
            <person name="Masuda S."/>
            <person name="Mauel C."/>
            <person name="Medigue C."/>
            <person name="Medina N."/>
            <person name="Mellado R.P."/>
            <person name="Mizuno M."/>
            <person name="Moestl D."/>
            <person name="Nakai S."/>
            <person name="Noback M."/>
            <person name="Noone D."/>
            <person name="O'Reilly M."/>
            <person name="Ogawa K."/>
            <person name="Ogiwara A."/>
            <person name="Oudega B."/>
            <person name="Park S.-H."/>
            <person name="Parro V."/>
            <person name="Pohl T.M."/>
            <person name="Portetelle D."/>
            <person name="Porwollik S."/>
            <person name="Prescott A.M."/>
            <person name="Presecan E."/>
            <person name="Pujic P."/>
            <person name="Purnelle B."/>
            <person name="Rapoport G."/>
            <person name="Rey M."/>
            <person name="Reynolds S."/>
            <person name="Rieger M."/>
            <person name="Rivolta C."/>
            <person name="Rocha E."/>
            <person name="Roche B."/>
            <person name="Rose M."/>
            <person name="Sadaie Y."/>
            <person name="Sato T."/>
            <person name="Scanlan E."/>
            <person name="Schleich S."/>
            <person name="Schroeter R."/>
            <person name="Scoffone F."/>
            <person name="Sekiguchi J."/>
            <person name="Sekowska A."/>
            <person name="Seror S.J."/>
            <person name="Serror P."/>
            <person name="Shin B.-S."/>
            <person name="Soldo B."/>
            <person name="Sorokin A."/>
            <person name="Tacconi E."/>
            <person name="Takagi T."/>
            <person name="Takahashi H."/>
            <person name="Takemaru K."/>
            <person name="Takeuchi M."/>
            <person name="Tamakoshi A."/>
            <person name="Tanaka T."/>
            <person name="Terpstra P."/>
            <person name="Tognoni A."/>
            <person name="Tosato V."/>
            <person name="Uchiyama S."/>
            <person name="Vandenbol M."/>
            <person name="Vannier F."/>
            <person name="Vassarotti A."/>
            <person name="Viari A."/>
            <person name="Wambutt R."/>
            <person name="Wedler E."/>
            <person name="Wedler H."/>
            <person name="Weitzenegger T."/>
            <person name="Winters P."/>
            <person name="Wipat A."/>
            <person name="Yamamoto H."/>
            <person name="Yamane K."/>
            <person name="Yasumoto K."/>
            <person name="Yata K."/>
            <person name="Yoshida K."/>
            <person name="Yoshikawa H.-F."/>
            <person name="Zumstein E."/>
            <person name="Yoshikawa H."/>
            <person name="Danchin A."/>
        </authorList>
    </citation>
    <scope>NUCLEOTIDE SEQUENCE [LARGE SCALE GENOMIC DNA]</scope>
    <source>
        <strain>168</strain>
    </source>
</reference>
<reference key="4">
    <citation type="journal article" date="1998" name="J. Bacteriol.">
        <title>All seven comG open reading frames are required for DNA binding during transformation of competent Bacillus subtilis.</title>
        <authorList>
            <person name="Chung Y.S."/>
            <person name="Dubnau D.A."/>
        </authorList>
    </citation>
    <scope>FUNCTION</scope>
</reference>
<reference key="5">
    <citation type="journal article" date="1998" name="Mol. Microbiol.">
        <title>Cell surface localization and processing of the ComG proteins, required for DNA binding during transformation of Bacillus subtilis.</title>
        <authorList>
            <person name="Chung Y.S."/>
            <person name="Breidt F."/>
            <person name="Dubnau D.A."/>
        </authorList>
    </citation>
    <scope>SUBCELLULAR LOCATION</scope>
    <scope>PROBABLE DISULFIDE BOND</scope>
</reference>
<protein>
    <recommendedName>
        <fullName evidence="4">Competence protein ComGG</fullName>
    </recommendedName>
    <alternativeName>
        <fullName>ComG operon protein 7</fullName>
    </alternativeName>
    <alternativeName>
        <fullName evidence="4">Minor pilin ComGG</fullName>
    </alternativeName>
</protein>
<keyword id="KW-1003">Cell membrane</keyword>
<keyword id="KW-0178">Competence</keyword>
<keyword id="KW-1015">Disulfide bond</keyword>
<keyword id="KW-0472">Membrane</keyword>
<keyword id="KW-0572">Peptidoglycan-anchor</keyword>
<keyword id="KW-1185">Reference proteome</keyword>
<keyword id="KW-0964">Secreted</keyword>
<keyword id="KW-0732">Signal</keyword>
<keyword id="KW-0813">Transport</keyword>
<gene>
    <name type="primary">comGG</name>
    <name type="synonym">comG7</name>
    <name type="ordered locus">BSU24670</name>
</gene>
<organism>
    <name type="scientific">Bacillus subtilis (strain 168)</name>
    <dbReference type="NCBI Taxonomy" id="224308"/>
    <lineage>
        <taxon>Bacteria</taxon>
        <taxon>Bacillati</taxon>
        <taxon>Bacillota</taxon>
        <taxon>Bacilli</taxon>
        <taxon>Bacillales</taxon>
        <taxon>Bacillaceae</taxon>
        <taxon>Bacillus</taxon>
    </lineage>
</organism>
<accession>P25959</accession>
<name>COMGG_BACSU</name>